<protein>
    <recommendedName>
        <fullName evidence="1">Small ribosomal subunit protein uS14</fullName>
    </recommendedName>
    <alternativeName>
        <fullName evidence="2">30S ribosomal protein S14</fullName>
    </alternativeName>
</protein>
<keyword id="KW-1185">Reference proteome</keyword>
<keyword id="KW-0687">Ribonucleoprotein</keyword>
<keyword id="KW-0689">Ribosomal protein</keyword>
<keyword id="KW-0694">RNA-binding</keyword>
<keyword id="KW-0699">rRNA-binding</keyword>
<comment type="function">
    <text evidence="1">Binds 16S rRNA, required for the assembly of 30S particles and may also be responsible for determining the conformation of the 16S rRNA at the A site.</text>
</comment>
<comment type="subunit">
    <text evidence="1">Part of the 30S ribosomal subunit. Contacts proteins S3 and S10.</text>
</comment>
<comment type="similarity">
    <text evidence="1">Belongs to the universal ribosomal protein uS14 family.</text>
</comment>
<sequence length="101" mass="11733">MAKKSMIEREIKRAKMVQQYAAKRASLKEITTNADLPMEQRFKAQLKLAELPRNSSATRIHNRCQLTGRPHAYYRKLKLSRIMLRELASFGQIPGMVKSSW</sequence>
<dbReference type="EMBL" id="CP000143">
    <property type="protein sequence ID" value="ABA77875.1"/>
    <property type="molecule type" value="Genomic_DNA"/>
</dbReference>
<dbReference type="RefSeq" id="WP_002722514.1">
    <property type="nucleotide sequence ID" value="NZ_CP030271.1"/>
</dbReference>
<dbReference type="RefSeq" id="YP_351776.1">
    <property type="nucleotide sequence ID" value="NC_007493.2"/>
</dbReference>
<dbReference type="SMR" id="Q3J5Q9"/>
<dbReference type="STRING" id="272943.RSP_1728"/>
<dbReference type="EnsemblBacteria" id="ABA77875">
    <property type="protein sequence ID" value="ABA77875"/>
    <property type="gene ID" value="RSP_1728"/>
</dbReference>
<dbReference type="GeneID" id="67445513"/>
<dbReference type="KEGG" id="rsp:RSP_1728"/>
<dbReference type="PATRIC" id="fig|272943.9.peg.606"/>
<dbReference type="eggNOG" id="COG0199">
    <property type="taxonomic scope" value="Bacteria"/>
</dbReference>
<dbReference type="OrthoDB" id="9810484at2"/>
<dbReference type="PhylomeDB" id="Q3J5Q9"/>
<dbReference type="Proteomes" id="UP000002703">
    <property type="component" value="Chromosome 1"/>
</dbReference>
<dbReference type="GO" id="GO:0005737">
    <property type="term" value="C:cytoplasm"/>
    <property type="evidence" value="ECO:0007669"/>
    <property type="project" value="UniProtKB-ARBA"/>
</dbReference>
<dbReference type="GO" id="GO:0015935">
    <property type="term" value="C:small ribosomal subunit"/>
    <property type="evidence" value="ECO:0007669"/>
    <property type="project" value="TreeGrafter"/>
</dbReference>
<dbReference type="GO" id="GO:0019843">
    <property type="term" value="F:rRNA binding"/>
    <property type="evidence" value="ECO:0007669"/>
    <property type="project" value="UniProtKB-UniRule"/>
</dbReference>
<dbReference type="GO" id="GO:0003735">
    <property type="term" value="F:structural constituent of ribosome"/>
    <property type="evidence" value="ECO:0007669"/>
    <property type="project" value="InterPro"/>
</dbReference>
<dbReference type="GO" id="GO:0006412">
    <property type="term" value="P:translation"/>
    <property type="evidence" value="ECO:0007669"/>
    <property type="project" value="UniProtKB-UniRule"/>
</dbReference>
<dbReference type="FunFam" id="1.10.287.1480:FF:000001">
    <property type="entry name" value="30S ribosomal protein S14"/>
    <property type="match status" value="1"/>
</dbReference>
<dbReference type="Gene3D" id="1.10.287.1480">
    <property type="match status" value="1"/>
</dbReference>
<dbReference type="HAMAP" id="MF_00537">
    <property type="entry name" value="Ribosomal_uS14_1"/>
    <property type="match status" value="1"/>
</dbReference>
<dbReference type="InterPro" id="IPR001209">
    <property type="entry name" value="Ribosomal_uS14"/>
</dbReference>
<dbReference type="InterPro" id="IPR023036">
    <property type="entry name" value="Ribosomal_uS14_bac/plastid"/>
</dbReference>
<dbReference type="InterPro" id="IPR018271">
    <property type="entry name" value="Ribosomal_uS14_CS"/>
</dbReference>
<dbReference type="NCBIfam" id="NF006477">
    <property type="entry name" value="PRK08881.1"/>
    <property type="match status" value="1"/>
</dbReference>
<dbReference type="PANTHER" id="PTHR19836">
    <property type="entry name" value="30S RIBOSOMAL PROTEIN S14"/>
    <property type="match status" value="1"/>
</dbReference>
<dbReference type="PANTHER" id="PTHR19836:SF19">
    <property type="entry name" value="SMALL RIBOSOMAL SUBUNIT PROTEIN US14M"/>
    <property type="match status" value="1"/>
</dbReference>
<dbReference type="Pfam" id="PF00253">
    <property type="entry name" value="Ribosomal_S14"/>
    <property type="match status" value="1"/>
</dbReference>
<dbReference type="SUPFAM" id="SSF57716">
    <property type="entry name" value="Glucocorticoid receptor-like (DNA-binding domain)"/>
    <property type="match status" value="1"/>
</dbReference>
<dbReference type="PROSITE" id="PS00527">
    <property type="entry name" value="RIBOSOMAL_S14"/>
    <property type="match status" value="1"/>
</dbReference>
<proteinExistence type="inferred from homology"/>
<feature type="chain" id="PRO_1000128544" description="Small ribosomal subunit protein uS14">
    <location>
        <begin position="1"/>
        <end position="101"/>
    </location>
</feature>
<accession>Q3J5Q9</accession>
<reference key="1">
    <citation type="submission" date="2005-09" db="EMBL/GenBank/DDBJ databases">
        <title>Complete sequence of chromosome 1 of Rhodobacter sphaeroides 2.4.1.</title>
        <authorList>
            <person name="Copeland A."/>
            <person name="Lucas S."/>
            <person name="Lapidus A."/>
            <person name="Barry K."/>
            <person name="Detter J.C."/>
            <person name="Glavina T."/>
            <person name="Hammon N."/>
            <person name="Israni S."/>
            <person name="Pitluck S."/>
            <person name="Richardson P."/>
            <person name="Mackenzie C."/>
            <person name="Choudhary M."/>
            <person name="Larimer F."/>
            <person name="Hauser L.J."/>
            <person name="Land M."/>
            <person name="Donohue T.J."/>
            <person name="Kaplan S."/>
        </authorList>
    </citation>
    <scope>NUCLEOTIDE SEQUENCE [LARGE SCALE GENOMIC DNA]</scope>
    <source>
        <strain>ATCC 17023 / DSM 158 / JCM 6121 / CCUG 31486 / LMG 2827 / NBRC 12203 / NCIMB 8253 / ATH 2.4.1.</strain>
    </source>
</reference>
<evidence type="ECO:0000255" key="1">
    <source>
        <dbReference type="HAMAP-Rule" id="MF_00537"/>
    </source>
</evidence>
<evidence type="ECO:0000305" key="2"/>
<gene>
    <name evidence="1" type="primary">rpsN</name>
    <name type="ordered locus">RHOS4_03070</name>
    <name type="ORF">RSP_1728</name>
</gene>
<organism>
    <name type="scientific">Cereibacter sphaeroides (strain ATCC 17023 / DSM 158 / JCM 6121 / CCUG 31486 / LMG 2827 / NBRC 12203 / NCIMB 8253 / ATH 2.4.1.)</name>
    <name type="common">Rhodobacter sphaeroides</name>
    <dbReference type="NCBI Taxonomy" id="272943"/>
    <lineage>
        <taxon>Bacteria</taxon>
        <taxon>Pseudomonadati</taxon>
        <taxon>Pseudomonadota</taxon>
        <taxon>Alphaproteobacteria</taxon>
        <taxon>Rhodobacterales</taxon>
        <taxon>Paracoccaceae</taxon>
        <taxon>Cereibacter</taxon>
    </lineage>
</organism>
<name>RS14_CERS4</name>